<gene>
    <name evidence="1" type="primary">malK</name>
    <name type="ordered locus">STY4426</name>
    <name type="ordered locus">t4136</name>
</gene>
<sequence>MASVQLRNVTKAWGDVVVSKDINLDIHDGEFVVFVGPSGCGKSTLLRMIAGLETITSGDLFIGETRMNDIPPAERGVGMVFQSYALYPHLSVAENMSFGLKLAGAKKEVMNQRVNQVAEVLQLAHLLERKPKALSGGQRQRVAIGRTLVAEPRVFLLDEPLSNLDAALRVQMRIEISRLHKRLGRTMIYVTHDQVEAMTLADKIVVLDAGRVAQVGKPLELYHYPADRFVAGFIGSPKMNFLPVKVTATAIEQVQVELPNRQQIWLPVESRGVQVGANMSLGIRPEHLLPSDIADVTLEGEVQVVEQLGHETQIYIQIPAIRQNLVYRQNDVVLVEEGATFAIGLPPERCHLFREDGSACRRLHQEPGV</sequence>
<protein>
    <recommendedName>
        <fullName evidence="1">Maltose/maltodextrin import ATP-binding protein MalK</fullName>
        <ecNumber evidence="1">7.5.2.1</ecNumber>
    </recommendedName>
</protein>
<organism>
    <name type="scientific">Salmonella typhi</name>
    <dbReference type="NCBI Taxonomy" id="90370"/>
    <lineage>
        <taxon>Bacteria</taxon>
        <taxon>Pseudomonadati</taxon>
        <taxon>Pseudomonadota</taxon>
        <taxon>Gammaproteobacteria</taxon>
        <taxon>Enterobacterales</taxon>
        <taxon>Enterobacteriaceae</taxon>
        <taxon>Salmonella</taxon>
    </lineage>
</organism>
<feature type="chain" id="PRO_0000092481" description="Maltose/maltodextrin import ATP-binding protein MalK">
    <location>
        <begin position="1"/>
        <end position="369"/>
    </location>
</feature>
<feature type="domain" description="ABC transporter" evidence="1">
    <location>
        <begin position="4"/>
        <end position="234"/>
    </location>
</feature>
<feature type="binding site" evidence="1">
    <location>
        <begin position="36"/>
        <end position="43"/>
    </location>
    <ligand>
        <name>ATP</name>
        <dbReference type="ChEBI" id="CHEBI:30616"/>
    </ligand>
</feature>
<feature type="sequence conflict" description="In Ref. 2; AAO71600." evidence="2" ref="2">
    <original>Y</original>
    <variation>H</variation>
    <location>
        <position position="315"/>
    </location>
</feature>
<evidence type="ECO:0000255" key="1">
    <source>
        <dbReference type="HAMAP-Rule" id="MF_01709"/>
    </source>
</evidence>
<evidence type="ECO:0000305" key="2"/>
<name>MALK_SALTI</name>
<accession>Q8Z1U0</accession>
<dbReference type="EC" id="7.5.2.1" evidence="1"/>
<dbReference type="EMBL" id="AL513382">
    <property type="protein sequence ID" value="CAD09214.1"/>
    <property type="molecule type" value="Genomic_DNA"/>
</dbReference>
<dbReference type="EMBL" id="AE014613">
    <property type="protein sequence ID" value="AAO71600.1"/>
    <property type="molecule type" value="Genomic_DNA"/>
</dbReference>
<dbReference type="RefSeq" id="NP_458528.1">
    <property type="nucleotide sequence ID" value="NC_003198.1"/>
</dbReference>
<dbReference type="RefSeq" id="WP_000179177.1">
    <property type="nucleotide sequence ID" value="NZ_PZMG01000023.1"/>
</dbReference>
<dbReference type="SMR" id="Q8Z1U0"/>
<dbReference type="STRING" id="220341.gene:17588258"/>
<dbReference type="KEGG" id="stt:t4136"/>
<dbReference type="KEGG" id="sty:STY4426"/>
<dbReference type="PATRIC" id="fig|220341.7.peg.4526"/>
<dbReference type="eggNOG" id="COG3842">
    <property type="taxonomic scope" value="Bacteria"/>
</dbReference>
<dbReference type="HOGENOM" id="CLU_000604_1_1_6"/>
<dbReference type="OMA" id="RCHLFKE"/>
<dbReference type="Proteomes" id="UP000000541">
    <property type="component" value="Chromosome"/>
</dbReference>
<dbReference type="Proteomes" id="UP000002670">
    <property type="component" value="Chromosome"/>
</dbReference>
<dbReference type="GO" id="GO:0055052">
    <property type="term" value="C:ATP-binding cassette (ABC) transporter complex, substrate-binding subunit-containing"/>
    <property type="evidence" value="ECO:0007669"/>
    <property type="project" value="TreeGrafter"/>
</dbReference>
<dbReference type="GO" id="GO:1990060">
    <property type="term" value="C:maltose transport complex"/>
    <property type="evidence" value="ECO:0007669"/>
    <property type="project" value="TreeGrafter"/>
</dbReference>
<dbReference type="GO" id="GO:0015423">
    <property type="term" value="F:ABC-type maltose transporter activity"/>
    <property type="evidence" value="ECO:0007669"/>
    <property type="project" value="UniProtKB-EC"/>
</dbReference>
<dbReference type="GO" id="GO:0005524">
    <property type="term" value="F:ATP binding"/>
    <property type="evidence" value="ECO:0007669"/>
    <property type="project" value="UniProtKB-KW"/>
</dbReference>
<dbReference type="GO" id="GO:0016887">
    <property type="term" value="F:ATP hydrolysis activity"/>
    <property type="evidence" value="ECO:0007669"/>
    <property type="project" value="InterPro"/>
</dbReference>
<dbReference type="CDD" id="cd03301">
    <property type="entry name" value="ABC_MalK_N"/>
    <property type="match status" value="1"/>
</dbReference>
<dbReference type="FunFam" id="3.40.50.300:FF:000042">
    <property type="entry name" value="Maltose/maltodextrin ABC transporter, ATP-binding protein"/>
    <property type="match status" value="1"/>
</dbReference>
<dbReference type="FunFam" id="2.40.50.100:FF:000014">
    <property type="entry name" value="Maltose/maltodextrin import ATP-binding protein MalK"/>
    <property type="match status" value="1"/>
</dbReference>
<dbReference type="FunFam" id="2.40.50.140:FF:000070">
    <property type="entry name" value="Maltose/maltodextrin import ATP-binding protein MalK"/>
    <property type="match status" value="1"/>
</dbReference>
<dbReference type="Gene3D" id="2.40.50.100">
    <property type="match status" value="1"/>
</dbReference>
<dbReference type="Gene3D" id="2.40.50.140">
    <property type="entry name" value="Nucleic acid-binding proteins"/>
    <property type="match status" value="1"/>
</dbReference>
<dbReference type="Gene3D" id="3.40.50.300">
    <property type="entry name" value="P-loop containing nucleotide triphosphate hydrolases"/>
    <property type="match status" value="1"/>
</dbReference>
<dbReference type="InterPro" id="IPR003593">
    <property type="entry name" value="AAA+_ATPase"/>
</dbReference>
<dbReference type="InterPro" id="IPR003439">
    <property type="entry name" value="ABC_transporter-like_ATP-bd"/>
</dbReference>
<dbReference type="InterPro" id="IPR017871">
    <property type="entry name" value="ABC_transporter-like_CS"/>
</dbReference>
<dbReference type="InterPro" id="IPR015855">
    <property type="entry name" value="ABC_transpr_MalK-like"/>
</dbReference>
<dbReference type="InterPro" id="IPR047641">
    <property type="entry name" value="ABC_transpr_MalK/UgpC-like"/>
</dbReference>
<dbReference type="InterPro" id="IPR008995">
    <property type="entry name" value="Mo/tungstate-bd_C_term_dom"/>
</dbReference>
<dbReference type="InterPro" id="IPR012340">
    <property type="entry name" value="NA-bd_OB-fold"/>
</dbReference>
<dbReference type="InterPro" id="IPR027417">
    <property type="entry name" value="P-loop_NTPase"/>
</dbReference>
<dbReference type="InterPro" id="IPR013611">
    <property type="entry name" value="Transp-assoc_OB_typ2"/>
</dbReference>
<dbReference type="NCBIfam" id="NF008233">
    <property type="entry name" value="PRK11000.1"/>
    <property type="match status" value="1"/>
</dbReference>
<dbReference type="NCBIfam" id="NF008653">
    <property type="entry name" value="PRK11650.1"/>
    <property type="match status" value="1"/>
</dbReference>
<dbReference type="PANTHER" id="PTHR43875">
    <property type="entry name" value="MALTODEXTRIN IMPORT ATP-BINDING PROTEIN MSMX"/>
    <property type="match status" value="1"/>
</dbReference>
<dbReference type="PANTHER" id="PTHR43875:SF3">
    <property type="entry name" value="MALTOSE_MALTODEXTRIN IMPORT ATP-BINDING PROTEIN MALK"/>
    <property type="match status" value="1"/>
</dbReference>
<dbReference type="Pfam" id="PF00005">
    <property type="entry name" value="ABC_tran"/>
    <property type="match status" value="1"/>
</dbReference>
<dbReference type="Pfam" id="PF08402">
    <property type="entry name" value="TOBE_2"/>
    <property type="match status" value="1"/>
</dbReference>
<dbReference type="SMART" id="SM00382">
    <property type="entry name" value="AAA"/>
    <property type="match status" value="1"/>
</dbReference>
<dbReference type="SUPFAM" id="SSF50331">
    <property type="entry name" value="MOP-like"/>
    <property type="match status" value="1"/>
</dbReference>
<dbReference type="SUPFAM" id="SSF52540">
    <property type="entry name" value="P-loop containing nucleoside triphosphate hydrolases"/>
    <property type="match status" value="1"/>
</dbReference>
<dbReference type="PROSITE" id="PS00211">
    <property type="entry name" value="ABC_TRANSPORTER_1"/>
    <property type="match status" value="1"/>
</dbReference>
<dbReference type="PROSITE" id="PS50893">
    <property type="entry name" value="ABC_TRANSPORTER_2"/>
    <property type="match status" value="1"/>
</dbReference>
<dbReference type="PROSITE" id="PS51245">
    <property type="entry name" value="MALK"/>
    <property type="match status" value="1"/>
</dbReference>
<reference key="1">
    <citation type="journal article" date="2001" name="Nature">
        <title>Complete genome sequence of a multiple drug resistant Salmonella enterica serovar Typhi CT18.</title>
        <authorList>
            <person name="Parkhill J."/>
            <person name="Dougan G."/>
            <person name="James K.D."/>
            <person name="Thomson N.R."/>
            <person name="Pickard D."/>
            <person name="Wain J."/>
            <person name="Churcher C.M."/>
            <person name="Mungall K.L."/>
            <person name="Bentley S.D."/>
            <person name="Holden M.T.G."/>
            <person name="Sebaihia M."/>
            <person name="Baker S."/>
            <person name="Basham D."/>
            <person name="Brooks K."/>
            <person name="Chillingworth T."/>
            <person name="Connerton P."/>
            <person name="Cronin A."/>
            <person name="Davis P."/>
            <person name="Davies R.M."/>
            <person name="Dowd L."/>
            <person name="White N."/>
            <person name="Farrar J."/>
            <person name="Feltwell T."/>
            <person name="Hamlin N."/>
            <person name="Haque A."/>
            <person name="Hien T.T."/>
            <person name="Holroyd S."/>
            <person name="Jagels K."/>
            <person name="Krogh A."/>
            <person name="Larsen T.S."/>
            <person name="Leather S."/>
            <person name="Moule S."/>
            <person name="O'Gaora P."/>
            <person name="Parry C."/>
            <person name="Quail M.A."/>
            <person name="Rutherford K.M."/>
            <person name="Simmonds M."/>
            <person name="Skelton J."/>
            <person name="Stevens K."/>
            <person name="Whitehead S."/>
            <person name="Barrell B.G."/>
        </authorList>
    </citation>
    <scope>NUCLEOTIDE SEQUENCE [LARGE SCALE GENOMIC DNA]</scope>
    <source>
        <strain>CT18</strain>
    </source>
</reference>
<reference key="2">
    <citation type="journal article" date="2003" name="J. Bacteriol.">
        <title>Comparative genomics of Salmonella enterica serovar Typhi strains Ty2 and CT18.</title>
        <authorList>
            <person name="Deng W."/>
            <person name="Liou S.-R."/>
            <person name="Plunkett G. III"/>
            <person name="Mayhew G.F."/>
            <person name="Rose D.J."/>
            <person name="Burland V."/>
            <person name="Kodoyianni V."/>
            <person name="Schwartz D.C."/>
            <person name="Blattner F.R."/>
        </authorList>
    </citation>
    <scope>NUCLEOTIDE SEQUENCE [LARGE SCALE GENOMIC DNA]</scope>
    <source>
        <strain>ATCC 700931 / Ty2</strain>
    </source>
</reference>
<keyword id="KW-0067">ATP-binding</keyword>
<keyword id="KW-0997">Cell inner membrane</keyword>
<keyword id="KW-1003">Cell membrane</keyword>
<keyword id="KW-0472">Membrane</keyword>
<keyword id="KW-0547">Nucleotide-binding</keyword>
<keyword id="KW-0762">Sugar transport</keyword>
<keyword id="KW-1278">Translocase</keyword>
<keyword id="KW-0813">Transport</keyword>
<comment type="function">
    <text evidence="1">Part of the ABC transporter complex MalEFGK involved in maltose/maltodextrin import. Responsible for energy coupling to the transport system.</text>
</comment>
<comment type="catalytic activity">
    <reaction evidence="1">
        <text>D-maltose(out) + ATP + H2O = D-maltose(in) + ADP + phosphate + H(+)</text>
        <dbReference type="Rhea" id="RHEA:22132"/>
        <dbReference type="ChEBI" id="CHEBI:15377"/>
        <dbReference type="ChEBI" id="CHEBI:15378"/>
        <dbReference type="ChEBI" id="CHEBI:17306"/>
        <dbReference type="ChEBI" id="CHEBI:30616"/>
        <dbReference type="ChEBI" id="CHEBI:43474"/>
        <dbReference type="ChEBI" id="CHEBI:456216"/>
        <dbReference type="EC" id="7.5.2.1"/>
    </reaction>
</comment>
<comment type="subunit">
    <text evidence="1">The complex is composed of two ATP-binding proteins (MalK), two transmembrane proteins (MalG and MalK) and a solute-binding protein (MalE).</text>
</comment>
<comment type="subcellular location">
    <subcellularLocation>
        <location evidence="1">Cell inner membrane</location>
        <topology evidence="1">Peripheral membrane protein</topology>
    </subcellularLocation>
</comment>
<comment type="similarity">
    <text evidence="1">Belongs to the ABC transporter superfamily. Maltooligosaccharide importer (TC 3.A.1.1.1) family.</text>
</comment>
<proteinExistence type="inferred from homology"/>